<dbReference type="EC" id="2.7.11.1"/>
<dbReference type="EMBL" id="AAFI02000050">
    <property type="protein sequence ID" value="EAL65884.1"/>
    <property type="molecule type" value="Genomic_DNA"/>
</dbReference>
<dbReference type="RefSeq" id="XP_639242.1">
    <property type="nucleotide sequence ID" value="XM_634150.1"/>
</dbReference>
<dbReference type="SMR" id="Q54RJ4"/>
<dbReference type="FunCoup" id="Q54RJ4">
    <property type="interactions" value="744"/>
</dbReference>
<dbReference type="GlyCosmos" id="Q54RJ4">
    <property type="glycosylation" value="21 sites, No reported glycans"/>
</dbReference>
<dbReference type="GlyGen" id="Q54RJ4">
    <property type="glycosylation" value="21 sites"/>
</dbReference>
<dbReference type="PaxDb" id="44689-DDB0231209"/>
<dbReference type="EnsemblProtists" id="EAL65884">
    <property type="protein sequence ID" value="EAL65884"/>
    <property type="gene ID" value="DDB_G0283109"/>
</dbReference>
<dbReference type="GeneID" id="8623928"/>
<dbReference type="KEGG" id="ddi:DDB_G0283109"/>
<dbReference type="dictyBase" id="DDB_G0283109">
    <property type="gene designation" value="iksA"/>
</dbReference>
<dbReference type="VEuPathDB" id="AmoebaDB:DDB_G0283109"/>
<dbReference type="eggNOG" id="KOG0032">
    <property type="taxonomic scope" value="Eukaryota"/>
</dbReference>
<dbReference type="HOGENOM" id="CLU_303933_0_0_1"/>
<dbReference type="InParanoid" id="Q54RJ4"/>
<dbReference type="OMA" id="PNILIHQ"/>
<dbReference type="PRO" id="PR:Q54RJ4"/>
<dbReference type="Proteomes" id="UP000002195">
    <property type="component" value="Chromosome 4"/>
</dbReference>
<dbReference type="GO" id="GO:0016020">
    <property type="term" value="C:membrane"/>
    <property type="evidence" value="ECO:0007669"/>
    <property type="project" value="UniProtKB-SubCell"/>
</dbReference>
<dbReference type="GO" id="GO:0005524">
    <property type="term" value="F:ATP binding"/>
    <property type="evidence" value="ECO:0007669"/>
    <property type="project" value="UniProtKB-KW"/>
</dbReference>
<dbReference type="GO" id="GO:0106310">
    <property type="term" value="F:protein serine kinase activity"/>
    <property type="evidence" value="ECO:0007669"/>
    <property type="project" value="RHEA"/>
</dbReference>
<dbReference type="GO" id="GO:0004674">
    <property type="term" value="F:protein serine/threonine kinase activity"/>
    <property type="evidence" value="ECO:0000318"/>
    <property type="project" value="GO_Central"/>
</dbReference>
<dbReference type="FunFam" id="3.30.200.20:FF:000306">
    <property type="entry name" value="IKS protein kinase"/>
    <property type="match status" value="1"/>
</dbReference>
<dbReference type="FunFam" id="1.10.510.10:FF:001555">
    <property type="entry name" value="Probable serine/threonine-protein kinase iksA"/>
    <property type="match status" value="1"/>
</dbReference>
<dbReference type="Gene3D" id="3.30.200.20">
    <property type="entry name" value="Phosphorylase Kinase, domain 1"/>
    <property type="match status" value="1"/>
</dbReference>
<dbReference type="Gene3D" id="1.10.510.10">
    <property type="entry name" value="Transferase(Phosphotransferase) domain 1"/>
    <property type="match status" value="1"/>
</dbReference>
<dbReference type="InterPro" id="IPR050339">
    <property type="entry name" value="CC_SR_Kinase"/>
</dbReference>
<dbReference type="InterPro" id="IPR011009">
    <property type="entry name" value="Kinase-like_dom_sf"/>
</dbReference>
<dbReference type="InterPro" id="IPR000719">
    <property type="entry name" value="Prot_kinase_dom"/>
</dbReference>
<dbReference type="InterPro" id="IPR017441">
    <property type="entry name" value="Protein_kinase_ATP_BS"/>
</dbReference>
<dbReference type="InterPro" id="IPR008271">
    <property type="entry name" value="Ser/Thr_kinase_AS"/>
</dbReference>
<dbReference type="PANTHER" id="PTHR11042">
    <property type="entry name" value="EUKARYOTIC TRANSLATION INITIATION FACTOR 2-ALPHA KINASE EIF2-ALPHA KINASE -RELATED"/>
    <property type="match status" value="1"/>
</dbReference>
<dbReference type="PANTHER" id="PTHR11042:SF138">
    <property type="entry name" value="SERINE_THREONINE-PROTEIN KINASE IKS1-RELATED"/>
    <property type="match status" value="1"/>
</dbReference>
<dbReference type="Pfam" id="PF00069">
    <property type="entry name" value="Pkinase"/>
    <property type="match status" value="1"/>
</dbReference>
<dbReference type="SMART" id="SM00220">
    <property type="entry name" value="S_TKc"/>
    <property type="match status" value="1"/>
</dbReference>
<dbReference type="SUPFAM" id="SSF56112">
    <property type="entry name" value="Protein kinase-like (PK-like)"/>
    <property type="match status" value="1"/>
</dbReference>
<dbReference type="PROSITE" id="PS00107">
    <property type="entry name" value="PROTEIN_KINASE_ATP"/>
    <property type="match status" value="1"/>
</dbReference>
<dbReference type="PROSITE" id="PS50011">
    <property type="entry name" value="PROTEIN_KINASE_DOM"/>
    <property type="match status" value="1"/>
</dbReference>
<dbReference type="PROSITE" id="PS00108">
    <property type="entry name" value="PROTEIN_KINASE_ST"/>
    <property type="match status" value="1"/>
</dbReference>
<name>IKSA_DICDI</name>
<reference key="1">
    <citation type="journal article" date="2005" name="Nature">
        <title>The genome of the social amoeba Dictyostelium discoideum.</title>
        <authorList>
            <person name="Eichinger L."/>
            <person name="Pachebat J.A."/>
            <person name="Gloeckner G."/>
            <person name="Rajandream M.A."/>
            <person name="Sucgang R."/>
            <person name="Berriman M."/>
            <person name="Song J."/>
            <person name="Olsen R."/>
            <person name="Szafranski K."/>
            <person name="Xu Q."/>
            <person name="Tunggal B."/>
            <person name="Kummerfeld S."/>
            <person name="Madera M."/>
            <person name="Konfortov B.A."/>
            <person name="Rivero F."/>
            <person name="Bankier A.T."/>
            <person name="Lehmann R."/>
            <person name="Hamlin N."/>
            <person name="Davies R."/>
            <person name="Gaudet P."/>
            <person name="Fey P."/>
            <person name="Pilcher K."/>
            <person name="Chen G."/>
            <person name="Saunders D."/>
            <person name="Sodergren E.J."/>
            <person name="Davis P."/>
            <person name="Kerhornou A."/>
            <person name="Nie X."/>
            <person name="Hall N."/>
            <person name="Anjard C."/>
            <person name="Hemphill L."/>
            <person name="Bason N."/>
            <person name="Farbrother P."/>
            <person name="Desany B."/>
            <person name="Just E."/>
            <person name="Morio T."/>
            <person name="Rost R."/>
            <person name="Churcher C.M."/>
            <person name="Cooper J."/>
            <person name="Haydock S."/>
            <person name="van Driessche N."/>
            <person name="Cronin A."/>
            <person name="Goodhead I."/>
            <person name="Muzny D.M."/>
            <person name="Mourier T."/>
            <person name="Pain A."/>
            <person name="Lu M."/>
            <person name="Harper D."/>
            <person name="Lindsay R."/>
            <person name="Hauser H."/>
            <person name="James K.D."/>
            <person name="Quiles M."/>
            <person name="Madan Babu M."/>
            <person name="Saito T."/>
            <person name="Buchrieser C."/>
            <person name="Wardroper A."/>
            <person name="Felder M."/>
            <person name="Thangavelu M."/>
            <person name="Johnson D."/>
            <person name="Knights A."/>
            <person name="Loulseged H."/>
            <person name="Mungall K.L."/>
            <person name="Oliver K."/>
            <person name="Price C."/>
            <person name="Quail M.A."/>
            <person name="Urushihara H."/>
            <person name="Hernandez J."/>
            <person name="Rabbinowitsch E."/>
            <person name="Steffen D."/>
            <person name="Sanders M."/>
            <person name="Ma J."/>
            <person name="Kohara Y."/>
            <person name="Sharp S."/>
            <person name="Simmonds M.N."/>
            <person name="Spiegler S."/>
            <person name="Tivey A."/>
            <person name="Sugano S."/>
            <person name="White B."/>
            <person name="Walker D."/>
            <person name="Woodward J.R."/>
            <person name="Winckler T."/>
            <person name="Tanaka Y."/>
            <person name="Shaulsky G."/>
            <person name="Schleicher M."/>
            <person name="Weinstock G.M."/>
            <person name="Rosenthal A."/>
            <person name="Cox E.C."/>
            <person name="Chisholm R.L."/>
            <person name="Gibbs R.A."/>
            <person name="Loomis W.F."/>
            <person name="Platzer M."/>
            <person name="Kay R.R."/>
            <person name="Williams J.G."/>
            <person name="Dear P.H."/>
            <person name="Noegel A.A."/>
            <person name="Barrell B.G."/>
            <person name="Kuspa A."/>
        </authorList>
    </citation>
    <scope>NUCLEOTIDE SEQUENCE [LARGE SCALE GENOMIC DNA]</scope>
    <source>
        <strain>AX4</strain>
    </source>
</reference>
<protein>
    <recommendedName>
        <fullName>Probable serine/threonine-protein kinase iksA</fullName>
        <ecNumber>2.7.11.1</ecNumber>
    </recommendedName>
    <alternativeName>
        <fullName>Ira1 kinase suppressor protein A</fullName>
    </alternativeName>
</protein>
<comment type="catalytic activity">
    <reaction>
        <text>L-seryl-[protein] + ATP = O-phospho-L-seryl-[protein] + ADP + H(+)</text>
        <dbReference type="Rhea" id="RHEA:17989"/>
        <dbReference type="Rhea" id="RHEA-COMP:9863"/>
        <dbReference type="Rhea" id="RHEA-COMP:11604"/>
        <dbReference type="ChEBI" id="CHEBI:15378"/>
        <dbReference type="ChEBI" id="CHEBI:29999"/>
        <dbReference type="ChEBI" id="CHEBI:30616"/>
        <dbReference type="ChEBI" id="CHEBI:83421"/>
        <dbReference type="ChEBI" id="CHEBI:456216"/>
        <dbReference type="EC" id="2.7.11.1"/>
    </reaction>
</comment>
<comment type="catalytic activity">
    <reaction>
        <text>L-threonyl-[protein] + ATP = O-phospho-L-threonyl-[protein] + ADP + H(+)</text>
        <dbReference type="Rhea" id="RHEA:46608"/>
        <dbReference type="Rhea" id="RHEA-COMP:11060"/>
        <dbReference type="Rhea" id="RHEA-COMP:11605"/>
        <dbReference type="ChEBI" id="CHEBI:15378"/>
        <dbReference type="ChEBI" id="CHEBI:30013"/>
        <dbReference type="ChEBI" id="CHEBI:30616"/>
        <dbReference type="ChEBI" id="CHEBI:61977"/>
        <dbReference type="ChEBI" id="CHEBI:456216"/>
        <dbReference type="EC" id="2.7.11.1"/>
    </reaction>
</comment>
<comment type="subcellular location">
    <subcellularLocation>
        <location evidence="5">Membrane</location>
        <topology evidence="5">Multi-pass membrane protein</topology>
    </subcellularLocation>
</comment>
<comment type="similarity">
    <text evidence="2">Belongs to the protein kinase superfamily. Ser/Thr protein kinase family.</text>
</comment>
<keyword id="KW-0067">ATP-binding</keyword>
<keyword id="KW-0325">Glycoprotein</keyword>
<keyword id="KW-0418">Kinase</keyword>
<keyword id="KW-0472">Membrane</keyword>
<keyword id="KW-0547">Nucleotide-binding</keyword>
<keyword id="KW-1185">Reference proteome</keyword>
<keyword id="KW-0723">Serine/threonine-protein kinase</keyword>
<keyword id="KW-0808">Transferase</keyword>
<keyword id="KW-0812">Transmembrane</keyword>
<keyword id="KW-1133">Transmembrane helix</keyword>
<feature type="chain" id="PRO_0000362014" description="Probable serine/threonine-protein kinase iksA">
    <location>
        <begin position="1"/>
        <end position="979"/>
    </location>
</feature>
<feature type="transmembrane region" description="Helical" evidence="1">
    <location>
        <begin position="846"/>
        <end position="866"/>
    </location>
</feature>
<feature type="transmembrane region" description="Helical" evidence="1">
    <location>
        <begin position="912"/>
        <end position="932"/>
    </location>
</feature>
<feature type="transmembrane region" description="Helical" evidence="1">
    <location>
        <begin position="956"/>
        <end position="976"/>
    </location>
</feature>
<feature type="domain" description="Protein kinase" evidence="2">
    <location>
        <begin position="261"/>
        <end position="568"/>
    </location>
</feature>
<feature type="region of interest" description="Disordered" evidence="4">
    <location>
        <begin position="207"/>
        <end position="245"/>
    </location>
</feature>
<feature type="region of interest" description="Disordered" evidence="4">
    <location>
        <begin position="593"/>
        <end position="666"/>
    </location>
</feature>
<feature type="region of interest" description="Disordered" evidence="4">
    <location>
        <begin position="713"/>
        <end position="793"/>
    </location>
</feature>
<feature type="compositionally biased region" description="Low complexity" evidence="4">
    <location>
        <begin position="212"/>
        <end position="244"/>
    </location>
</feature>
<feature type="compositionally biased region" description="Polar residues" evidence="4">
    <location>
        <begin position="593"/>
        <end position="602"/>
    </location>
</feature>
<feature type="compositionally biased region" description="Low complexity" evidence="4">
    <location>
        <begin position="610"/>
        <end position="666"/>
    </location>
</feature>
<feature type="compositionally biased region" description="Acidic residues" evidence="4">
    <location>
        <begin position="713"/>
        <end position="727"/>
    </location>
</feature>
<feature type="compositionally biased region" description="Low complexity" evidence="4">
    <location>
        <begin position="728"/>
        <end position="737"/>
    </location>
</feature>
<feature type="compositionally biased region" description="Low complexity" evidence="4">
    <location>
        <begin position="753"/>
        <end position="773"/>
    </location>
</feature>
<feature type="active site" description="Proton acceptor" evidence="2 3">
    <location>
        <position position="397"/>
    </location>
</feature>
<feature type="binding site" evidence="2">
    <location>
        <begin position="267"/>
        <end position="275"/>
    </location>
    <ligand>
        <name>ATP</name>
        <dbReference type="ChEBI" id="CHEBI:30616"/>
    </ligand>
</feature>
<feature type="binding site" evidence="2">
    <location>
        <position position="293"/>
    </location>
    <ligand>
        <name>ATP</name>
        <dbReference type="ChEBI" id="CHEBI:30616"/>
    </ligand>
</feature>
<feature type="glycosylation site" description="N-linked (GlcNAc...) asparagine" evidence="1">
    <location>
        <position position="32"/>
    </location>
</feature>
<feature type="glycosylation site" description="N-linked (GlcNAc...) asparagine" evidence="1">
    <location>
        <position position="110"/>
    </location>
</feature>
<feature type="glycosylation site" description="N-linked (GlcNAc...) asparagine" evidence="1">
    <location>
        <position position="120"/>
    </location>
</feature>
<feature type="glycosylation site" description="N-linked (GlcNAc...) asparagine" evidence="1">
    <location>
        <position position="121"/>
    </location>
</feature>
<feature type="glycosylation site" description="N-linked (GlcNAc...) asparagine" evidence="1">
    <location>
        <position position="147"/>
    </location>
</feature>
<feature type="glycosylation site" description="N-linked (GlcNAc...) asparagine" evidence="1">
    <location>
        <position position="155"/>
    </location>
</feature>
<feature type="glycosylation site" description="N-linked (GlcNAc...) asparagine" evidence="1">
    <location>
        <position position="161"/>
    </location>
</feature>
<feature type="glycosylation site" description="N-linked (GlcNAc...) asparagine" evidence="1">
    <location>
        <position position="220"/>
    </location>
</feature>
<feature type="glycosylation site" description="N-linked (GlcNAc...) asparagine" evidence="1">
    <location>
        <position position="231"/>
    </location>
</feature>
<feature type="glycosylation site" description="N-linked (GlcNAc...) asparagine" evidence="1">
    <location>
        <position position="243"/>
    </location>
</feature>
<feature type="glycosylation site" description="N-linked (GlcNAc...) asparagine" evidence="1">
    <location>
        <position position="592"/>
    </location>
</feature>
<feature type="glycosylation site" description="N-linked (GlcNAc...) asparagine" evidence="1">
    <location>
        <position position="597"/>
    </location>
</feature>
<feature type="glycosylation site" description="N-linked (GlcNAc...) asparagine" evidence="1">
    <location>
        <position position="615"/>
    </location>
</feature>
<feature type="glycosylation site" description="N-linked (GlcNAc...) asparagine" evidence="1">
    <location>
        <position position="645"/>
    </location>
</feature>
<feature type="glycosylation site" description="N-linked (GlcNAc...) asparagine" evidence="1">
    <location>
        <position position="646"/>
    </location>
</feature>
<feature type="glycosylation site" description="N-linked (GlcNAc...) asparagine" evidence="1">
    <location>
        <position position="663"/>
    </location>
</feature>
<feature type="glycosylation site" description="N-linked (GlcNAc...) asparagine" evidence="1">
    <location>
        <position position="699"/>
    </location>
</feature>
<feature type="glycosylation site" description="N-linked (GlcNAc...) asparagine" evidence="1">
    <location>
        <position position="731"/>
    </location>
</feature>
<feature type="glycosylation site" description="N-linked (GlcNAc...) asparagine" evidence="1">
    <location>
        <position position="734"/>
    </location>
</feature>
<feature type="glycosylation site" description="N-linked (GlcNAc...) asparagine" evidence="1">
    <location>
        <position position="870"/>
    </location>
</feature>
<feature type="glycosylation site" description="N-linked (GlcNAc...) asparagine" evidence="1">
    <location>
        <position position="894"/>
    </location>
</feature>
<organism>
    <name type="scientific">Dictyostelium discoideum</name>
    <name type="common">Social amoeba</name>
    <dbReference type="NCBI Taxonomy" id="44689"/>
    <lineage>
        <taxon>Eukaryota</taxon>
        <taxon>Amoebozoa</taxon>
        <taxon>Evosea</taxon>
        <taxon>Eumycetozoa</taxon>
        <taxon>Dictyostelia</taxon>
        <taxon>Dictyosteliales</taxon>
        <taxon>Dictyosteliaceae</taxon>
        <taxon>Dictyostelium</taxon>
    </lineage>
</organism>
<proteinExistence type="inferred from homology"/>
<evidence type="ECO:0000255" key="1"/>
<evidence type="ECO:0000255" key="2">
    <source>
        <dbReference type="PROSITE-ProRule" id="PRU00159"/>
    </source>
</evidence>
<evidence type="ECO:0000255" key="3">
    <source>
        <dbReference type="PROSITE-ProRule" id="PRU10027"/>
    </source>
</evidence>
<evidence type="ECO:0000256" key="4">
    <source>
        <dbReference type="SAM" id="MobiDB-lite"/>
    </source>
</evidence>
<evidence type="ECO:0000305" key="5"/>
<gene>
    <name type="primary">iksA</name>
    <name type="ORF">DDB_G0283109</name>
</gene>
<sequence length="979" mass="109467">MEEDKYQLVLHNDDLERMVLYDPNSKSLLVRNSTDMLRQKSKQLVLQQQIESPYSPMPSLRSPSIPTTPTLVGGLSSQSHNNNHPSTLHIMCPYCKRSYNNNNNNNINNNISTNNNNINNNSSNNLNNLNNNINNINNGIFNNNNNNNSNSNNNNISGGNNNTMDINGNSIVSGVIAPFNPSPYYRSPISEPPFISRDYFLLLQDSSKSGVNNNNNNNNNDSTTTNNNNNNNTTPPQQQQQQNSSGLNSEFLNIGYYKKFFKEDIKIGSGGFGSVYLCRHLINGVDLGEFAVKKVPVGENLPWLFRVLREVKALETLTKHRNIINYKHSWLEYDQPADFGPKVPCLYILMEYANNGNLQDYMAEKRDLIPENEIWSFFIDLCHGIGYLHHSGIIHRDIKPPNILIHQSYDSITDREVTHLMISDFGTCDTIGPLESLAPPLYKNNIKRTGNTGTIEYLAPELLQKGVNGEYNSDYDEKCDIWSLGILLYQMAYGTLPYRYSGDPFIDEDPNRNLPSLIDEIAGFSNNRLIFPQIPQRSRDLKDMITILLRAKPHERPTISQILSTHFIQSKTKHYTINPIHLPFTKRNKFKNTSVHNTTASTIKLRRKGSISTTNSTTSSSSSTATSSSLSSTTIATTSSSNAINNTTATTTTNSNLGNNNNNNTNALISSRISPIRKTQLVEENSEDSSNEIANINPNRSLIQPIVLSDTDNDDIIIDDDDDDDDSTNNNDTNNTDNTDDEMNSGDVVGIVNNKKSSYSRSSSIRSPSSSNKLRQRTISNSGGNNGIRKALPSLEAPRSGRFKRAAIVIQRGVRSSAVYQAFYMLQALFQVWLCFDQCSTCPNTFPSPILLYPLLLLSLIPILVVNNNNNSNNMNNNNNNNNINSNGQLAHLNGSGGGGIINNGNRDTKKINTIISIIRFIYYFVISVLLPKEISCKSTSHIIPILPPIADYVVFPLLSLFKNLTLLIINLIFIFYRD</sequence>
<accession>Q54RJ4</accession>